<name>OST1A_ORYSJ</name>
<proteinExistence type="evidence at transcript level"/>
<gene>
    <name type="primary">OST1A</name>
    <name type="synonym">RPN1A</name>
    <name type="ordered locus">Os05g0301500</name>
    <name type="ordered locus">LOC_Os05g23600</name>
    <name type="ORF">OsJ_17960</name>
</gene>
<sequence length="615" mass="69522">MATPPPLRRVAALLLLLVAAASTPTARADLVVTRADRKVDLTSHIVRVLTSLKVENSGPEAVSQFLLAFPNVQAKNLAAIRAFGTEEKVKGPSMVLPIEVVQPSGVPPELTFFSASLSKPLEKGKTLHLDVLTVFTHSVQPFPEEITQAESQLVVYQDSAQYLSPYPVKVQTLSIRLPGGRVESYTKYPNTKLAESELKYGPYEDLPPFSYSPMVVHYENNNPFAVAKEVIREIEISHWGNVQITEHYNIAHGGAKLKGEFSRIDYQSRPYIRGVSSFRHLIARLPPRAHSIYYRDEIGNISTSHLWSDSKKTQLEVEPRFPLFGGWQTTFTIGYGLPLQDFVFNSDGKRFLNITFGSPVEEILIEKLIVKVVLPEGSKDIDISVPFPTKQEQEVKYSHLDISGRPVVVLEKLDVIPEHNLYFQVYYRFNNISLLREPMMLITGFFLLFMACIVYMRTDMSISKNSPSYLAKVQWDEVQSIIQQIQAIFNQCLAAHDKLETSLHELSRSGDVKSCKVARKTADAQFKELAKELKPLLTSLQSSSQSYQIWPKVEELVAKERELQDKLMTRHSTVVDSFEKKLRGQDVENRIAAQQQKVAALRQEVESLLEYISEI</sequence>
<comment type="function">
    <text evidence="2">Subunit of the oligosaccharyl transferase (OST) complex that catalyzes the initial transfer of a defined glycan (Glc(3)Man(9)GlcNAc(2) in eukaryotes) from the lipid carrier dolichol-pyrophosphate to an asparagine residue within an Asn-X-Ser/Thr consensus motif in nascent polypeptide chains, the first step in protein N-glycosylation. N-glycosylation occurs cotranslationally and the complex associates with the Sec61 complex at the channel-forming translocon complex that mediates protein translocation across the endoplasmic reticulum (ER). All subunits are required for a maximal enzyme activity.</text>
</comment>
<comment type="pathway">
    <text>Protein modification; protein glycosylation.</text>
</comment>
<comment type="subunit">
    <text evidence="2">Component of the oligosaccharyltransferase (OST) complex.</text>
</comment>
<comment type="subcellular location">
    <subcellularLocation>
        <location evidence="1">Endoplasmic reticulum membrane</location>
        <topology evidence="1">Single-pass type I membrane protein</topology>
    </subcellularLocation>
</comment>
<comment type="similarity">
    <text evidence="4">Belongs to the OST1 family.</text>
</comment>
<reference key="1">
    <citation type="journal article" date="2005" name="Nature">
        <title>The map-based sequence of the rice genome.</title>
        <authorList>
            <consortium name="International rice genome sequencing project (IRGSP)"/>
        </authorList>
    </citation>
    <scope>NUCLEOTIDE SEQUENCE [LARGE SCALE GENOMIC DNA]</scope>
    <source>
        <strain>cv. Nipponbare</strain>
    </source>
</reference>
<reference key="2">
    <citation type="journal article" date="2008" name="Nucleic Acids Res.">
        <title>The rice annotation project database (RAP-DB): 2008 update.</title>
        <authorList>
            <consortium name="The rice annotation project (RAP)"/>
        </authorList>
    </citation>
    <scope>GENOME REANNOTATION</scope>
    <source>
        <strain>cv. Nipponbare</strain>
    </source>
</reference>
<reference key="3">
    <citation type="journal article" date="2013" name="Rice">
        <title>Improvement of the Oryza sativa Nipponbare reference genome using next generation sequence and optical map data.</title>
        <authorList>
            <person name="Kawahara Y."/>
            <person name="de la Bastide M."/>
            <person name="Hamilton J.P."/>
            <person name="Kanamori H."/>
            <person name="McCombie W.R."/>
            <person name="Ouyang S."/>
            <person name="Schwartz D.C."/>
            <person name="Tanaka T."/>
            <person name="Wu J."/>
            <person name="Zhou S."/>
            <person name="Childs K.L."/>
            <person name="Davidson R.M."/>
            <person name="Lin H."/>
            <person name="Quesada-Ocampo L."/>
            <person name="Vaillancourt B."/>
            <person name="Sakai H."/>
            <person name="Lee S.S."/>
            <person name="Kim J."/>
            <person name="Numa H."/>
            <person name="Itoh T."/>
            <person name="Buell C.R."/>
            <person name="Matsumoto T."/>
        </authorList>
    </citation>
    <scope>GENOME REANNOTATION</scope>
    <source>
        <strain>cv. Nipponbare</strain>
    </source>
</reference>
<reference key="4">
    <citation type="journal article" date="2005" name="PLoS Biol.">
        <title>The genomes of Oryza sativa: a history of duplications.</title>
        <authorList>
            <person name="Yu J."/>
            <person name="Wang J."/>
            <person name="Lin W."/>
            <person name="Li S."/>
            <person name="Li H."/>
            <person name="Zhou J."/>
            <person name="Ni P."/>
            <person name="Dong W."/>
            <person name="Hu S."/>
            <person name="Zeng C."/>
            <person name="Zhang J."/>
            <person name="Zhang Y."/>
            <person name="Li R."/>
            <person name="Xu Z."/>
            <person name="Li S."/>
            <person name="Li X."/>
            <person name="Zheng H."/>
            <person name="Cong L."/>
            <person name="Lin L."/>
            <person name="Yin J."/>
            <person name="Geng J."/>
            <person name="Li G."/>
            <person name="Shi J."/>
            <person name="Liu J."/>
            <person name="Lv H."/>
            <person name="Li J."/>
            <person name="Wang J."/>
            <person name="Deng Y."/>
            <person name="Ran L."/>
            <person name="Shi X."/>
            <person name="Wang X."/>
            <person name="Wu Q."/>
            <person name="Li C."/>
            <person name="Ren X."/>
            <person name="Wang J."/>
            <person name="Wang X."/>
            <person name="Li D."/>
            <person name="Liu D."/>
            <person name="Zhang X."/>
            <person name="Ji Z."/>
            <person name="Zhao W."/>
            <person name="Sun Y."/>
            <person name="Zhang Z."/>
            <person name="Bao J."/>
            <person name="Han Y."/>
            <person name="Dong L."/>
            <person name="Ji J."/>
            <person name="Chen P."/>
            <person name="Wu S."/>
            <person name="Liu J."/>
            <person name="Xiao Y."/>
            <person name="Bu D."/>
            <person name="Tan J."/>
            <person name="Yang L."/>
            <person name="Ye C."/>
            <person name="Zhang J."/>
            <person name="Xu J."/>
            <person name="Zhou Y."/>
            <person name="Yu Y."/>
            <person name="Zhang B."/>
            <person name="Zhuang S."/>
            <person name="Wei H."/>
            <person name="Liu B."/>
            <person name="Lei M."/>
            <person name="Yu H."/>
            <person name="Li Y."/>
            <person name="Xu H."/>
            <person name="Wei S."/>
            <person name="He X."/>
            <person name="Fang L."/>
            <person name="Zhang Z."/>
            <person name="Zhang Y."/>
            <person name="Huang X."/>
            <person name="Su Z."/>
            <person name="Tong W."/>
            <person name="Li J."/>
            <person name="Tong Z."/>
            <person name="Li S."/>
            <person name="Ye J."/>
            <person name="Wang L."/>
            <person name="Fang L."/>
            <person name="Lei T."/>
            <person name="Chen C.-S."/>
            <person name="Chen H.-C."/>
            <person name="Xu Z."/>
            <person name="Li H."/>
            <person name="Huang H."/>
            <person name="Zhang F."/>
            <person name="Xu H."/>
            <person name="Li N."/>
            <person name="Zhao C."/>
            <person name="Li S."/>
            <person name="Dong L."/>
            <person name="Huang Y."/>
            <person name="Li L."/>
            <person name="Xi Y."/>
            <person name="Qi Q."/>
            <person name="Li W."/>
            <person name="Zhang B."/>
            <person name="Hu W."/>
            <person name="Zhang Y."/>
            <person name="Tian X."/>
            <person name="Jiao Y."/>
            <person name="Liang X."/>
            <person name="Jin J."/>
            <person name="Gao L."/>
            <person name="Zheng W."/>
            <person name="Hao B."/>
            <person name="Liu S.-M."/>
            <person name="Wang W."/>
            <person name="Yuan L."/>
            <person name="Cao M."/>
            <person name="McDermott J."/>
            <person name="Samudrala R."/>
            <person name="Wang J."/>
            <person name="Wong G.K.-S."/>
            <person name="Yang H."/>
        </authorList>
    </citation>
    <scope>NUCLEOTIDE SEQUENCE [LARGE SCALE GENOMIC DNA]</scope>
    <source>
        <strain>cv. Nipponbare</strain>
    </source>
</reference>
<reference key="5">
    <citation type="journal article" date="2003" name="Science">
        <title>Collection, mapping, and annotation of over 28,000 cDNA clones from japonica rice.</title>
        <authorList>
            <consortium name="The rice full-length cDNA consortium"/>
        </authorList>
    </citation>
    <scope>NUCLEOTIDE SEQUENCE [LARGE SCALE MRNA]</scope>
    <source>
        <strain>cv. Nipponbare</strain>
    </source>
</reference>
<organism>
    <name type="scientific">Oryza sativa subsp. japonica</name>
    <name type="common">Rice</name>
    <dbReference type="NCBI Taxonomy" id="39947"/>
    <lineage>
        <taxon>Eukaryota</taxon>
        <taxon>Viridiplantae</taxon>
        <taxon>Streptophyta</taxon>
        <taxon>Embryophyta</taxon>
        <taxon>Tracheophyta</taxon>
        <taxon>Spermatophyta</taxon>
        <taxon>Magnoliopsida</taxon>
        <taxon>Liliopsida</taxon>
        <taxon>Poales</taxon>
        <taxon>Poaceae</taxon>
        <taxon>BOP clade</taxon>
        <taxon>Oryzoideae</taxon>
        <taxon>Oryzeae</taxon>
        <taxon>Oryzinae</taxon>
        <taxon>Oryza</taxon>
        <taxon>Oryza sativa</taxon>
    </lineage>
</organism>
<accession>Q0DJC5</accession>
<accession>A0A0P0WKA7</accession>
<dbReference type="EMBL" id="AP008211">
    <property type="protein sequence ID" value="BAF17048.1"/>
    <property type="molecule type" value="Genomic_DNA"/>
</dbReference>
<dbReference type="EMBL" id="AP014961">
    <property type="protein sequence ID" value="BAS93226.1"/>
    <property type="molecule type" value="Genomic_DNA"/>
</dbReference>
<dbReference type="EMBL" id="CM000142">
    <property type="protein sequence ID" value="EEE63151.1"/>
    <property type="molecule type" value="Genomic_DNA"/>
</dbReference>
<dbReference type="EMBL" id="AK070329">
    <property type="protein sequence ID" value="BAG91888.1"/>
    <property type="molecule type" value="mRNA"/>
</dbReference>
<dbReference type="RefSeq" id="XP_015640190.1">
    <property type="nucleotide sequence ID" value="XM_015784704.1"/>
</dbReference>
<dbReference type="SMR" id="Q0DJC5"/>
<dbReference type="FunCoup" id="Q0DJC5">
    <property type="interactions" value="3631"/>
</dbReference>
<dbReference type="STRING" id="39947.Q0DJC5"/>
<dbReference type="GlyCosmos" id="Q0DJC5">
    <property type="glycosylation" value="3 sites, No reported glycans"/>
</dbReference>
<dbReference type="PaxDb" id="39947-Q0DJC5"/>
<dbReference type="EnsemblPlants" id="Os05t0301500-01">
    <property type="protein sequence ID" value="Os05t0301500-01"/>
    <property type="gene ID" value="Os05g0301500"/>
</dbReference>
<dbReference type="Gramene" id="Os05t0301500-01">
    <property type="protein sequence ID" value="Os05t0301500-01"/>
    <property type="gene ID" value="Os05g0301500"/>
</dbReference>
<dbReference type="KEGG" id="dosa:Os05g0301500"/>
<dbReference type="eggNOG" id="KOG2291">
    <property type="taxonomic scope" value="Eukaryota"/>
</dbReference>
<dbReference type="HOGENOM" id="CLU_031381_2_0_1"/>
<dbReference type="InParanoid" id="Q0DJC5"/>
<dbReference type="OMA" id="RYEYARE"/>
<dbReference type="OrthoDB" id="310030at2759"/>
<dbReference type="UniPathway" id="UPA00378"/>
<dbReference type="Proteomes" id="UP000000763">
    <property type="component" value="Chromosome 5"/>
</dbReference>
<dbReference type="Proteomes" id="UP000007752">
    <property type="component" value="Chromosome 5"/>
</dbReference>
<dbReference type="Proteomes" id="UP000059680">
    <property type="component" value="Chromosome 5"/>
</dbReference>
<dbReference type="ExpressionAtlas" id="Q0DJC5">
    <property type="expression patterns" value="baseline and differential"/>
</dbReference>
<dbReference type="GO" id="GO:0008250">
    <property type="term" value="C:oligosaccharyltransferase complex"/>
    <property type="evidence" value="ECO:0000318"/>
    <property type="project" value="GO_Central"/>
</dbReference>
<dbReference type="GO" id="GO:0018279">
    <property type="term" value="P:protein N-linked glycosylation via asparagine"/>
    <property type="evidence" value="ECO:0000318"/>
    <property type="project" value="GO_Central"/>
</dbReference>
<dbReference type="InterPro" id="IPR007676">
    <property type="entry name" value="Ribophorin_I"/>
</dbReference>
<dbReference type="PANTHER" id="PTHR21049:SF0">
    <property type="entry name" value="DOLICHYL-DIPHOSPHOOLIGOSACCHARIDE--PROTEIN GLYCOSYLTRANSFERASE SUBUNIT 1"/>
    <property type="match status" value="1"/>
</dbReference>
<dbReference type="PANTHER" id="PTHR21049">
    <property type="entry name" value="RIBOPHORIN I"/>
    <property type="match status" value="1"/>
</dbReference>
<dbReference type="Pfam" id="PF04597">
    <property type="entry name" value="Ribophorin_I"/>
    <property type="match status" value="1"/>
</dbReference>
<feature type="signal peptide" evidence="3">
    <location>
        <begin position="1"/>
        <end position="28"/>
    </location>
</feature>
<feature type="chain" id="PRO_0000420809" description="Dolichyl-diphosphooligosaccharide--protein glycosyltransferase subunit 1A">
    <location>
        <begin position="29"/>
        <end position="615"/>
    </location>
</feature>
<feature type="topological domain" description="Lumenal" evidence="3">
    <location>
        <begin position="29"/>
        <end position="437"/>
    </location>
</feature>
<feature type="transmembrane region" description="Helical" evidence="3">
    <location>
        <begin position="438"/>
        <end position="455"/>
    </location>
</feature>
<feature type="topological domain" description="Cytoplasmic" evidence="3">
    <location>
        <begin position="456"/>
        <end position="615"/>
    </location>
</feature>
<feature type="modified residue" description="N6-acetyllysine" evidence="1">
    <location>
        <position position="187"/>
    </location>
</feature>
<feature type="glycosylation site" description="N-linked (GlcNAc...) asparagine" evidence="3">
    <location>
        <position position="300"/>
    </location>
</feature>
<feature type="glycosylation site" description="N-linked (GlcNAc...) asparagine" evidence="3">
    <location>
        <position position="353"/>
    </location>
</feature>
<feature type="glycosylation site" description="N-linked (GlcNAc...) asparagine" evidence="3">
    <location>
        <position position="431"/>
    </location>
</feature>
<keyword id="KW-0007">Acetylation</keyword>
<keyword id="KW-0256">Endoplasmic reticulum</keyword>
<keyword id="KW-0325">Glycoprotein</keyword>
<keyword id="KW-0472">Membrane</keyword>
<keyword id="KW-1185">Reference proteome</keyword>
<keyword id="KW-0732">Signal</keyword>
<keyword id="KW-0812">Transmembrane</keyword>
<keyword id="KW-1133">Transmembrane helix</keyword>
<protein>
    <recommendedName>
        <fullName>Dolichyl-diphosphooligosaccharide--protein glycosyltransferase subunit 1A</fullName>
    </recommendedName>
    <alternativeName>
        <fullName>Ribophorin IA</fullName>
        <shortName>RPN-IA</shortName>
    </alternativeName>
    <alternativeName>
        <fullName>Ribophorin-1A</fullName>
    </alternativeName>
</protein>
<evidence type="ECO:0000250" key="1"/>
<evidence type="ECO:0000250" key="2">
    <source>
        <dbReference type="UniProtKB" id="P41543"/>
    </source>
</evidence>
<evidence type="ECO:0000255" key="3"/>
<evidence type="ECO:0000305" key="4"/>